<feature type="chain" id="PRO_1000184724" description="ATP synthase subunit delta">
    <location>
        <begin position="1"/>
        <end position="180"/>
    </location>
</feature>
<protein>
    <recommendedName>
        <fullName evidence="1">ATP synthase subunit delta</fullName>
    </recommendedName>
    <alternativeName>
        <fullName evidence="1">ATP synthase F(1) sector subunit delta</fullName>
    </alternativeName>
    <alternativeName>
        <fullName evidence="1">F-type ATPase subunit delta</fullName>
        <shortName evidence="1">F-ATPase subunit delta</shortName>
    </alternativeName>
</protein>
<evidence type="ECO:0000255" key="1">
    <source>
        <dbReference type="HAMAP-Rule" id="MF_01416"/>
    </source>
</evidence>
<accession>B3EA04</accession>
<organism>
    <name type="scientific">Trichlorobacter lovleyi (strain ATCC BAA-1151 / DSM 17278 / SZ)</name>
    <name type="common">Geobacter lovleyi</name>
    <dbReference type="NCBI Taxonomy" id="398767"/>
    <lineage>
        <taxon>Bacteria</taxon>
        <taxon>Pseudomonadati</taxon>
        <taxon>Thermodesulfobacteriota</taxon>
        <taxon>Desulfuromonadia</taxon>
        <taxon>Geobacterales</taxon>
        <taxon>Geobacteraceae</taxon>
        <taxon>Trichlorobacter</taxon>
    </lineage>
</organism>
<keyword id="KW-0066">ATP synthesis</keyword>
<keyword id="KW-0997">Cell inner membrane</keyword>
<keyword id="KW-1003">Cell membrane</keyword>
<keyword id="KW-0139">CF(1)</keyword>
<keyword id="KW-0375">Hydrogen ion transport</keyword>
<keyword id="KW-0406">Ion transport</keyword>
<keyword id="KW-0472">Membrane</keyword>
<keyword id="KW-1185">Reference proteome</keyword>
<keyword id="KW-0813">Transport</keyword>
<proteinExistence type="inferred from homology"/>
<gene>
    <name evidence="1" type="primary">atpH</name>
    <name type="ordered locus">Glov_3173</name>
</gene>
<reference key="1">
    <citation type="submission" date="2008-05" db="EMBL/GenBank/DDBJ databases">
        <title>Complete sequence of chromosome of Geobacter lovleyi SZ.</title>
        <authorList>
            <consortium name="US DOE Joint Genome Institute"/>
            <person name="Lucas S."/>
            <person name="Copeland A."/>
            <person name="Lapidus A."/>
            <person name="Glavina del Rio T."/>
            <person name="Dalin E."/>
            <person name="Tice H."/>
            <person name="Bruce D."/>
            <person name="Goodwin L."/>
            <person name="Pitluck S."/>
            <person name="Chertkov O."/>
            <person name="Meincke L."/>
            <person name="Brettin T."/>
            <person name="Detter J.C."/>
            <person name="Han C."/>
            <person name="Tapia R."/>
            <person name="Kuske C.R."/>
            <person name="Schmutz J."/>
            <person name="Larimer F."/>
            <person name="Land M."/>
            <person name="Hauser L."/>
            <person name="Kyrpides N."/>
            <person name="Mikhailova N."/>
            <person name="Sung Y."/>
            <person name="Fletcher K.E."/>
            <person name="Ritalahti K.M."/>
            <person name="Loeffler F.E."/>
            <person name="Richardson P."/>
        </authorList>
    </citation>
    <scope>NUCLEOTIDE SEQUENCE [LARGE SCALE GENOMIC DNA]</scope>
    <source>
        <strain>ATCC BAA-1151 / DSM 17278 / SZ</strain>
    </source>
</reference>
<comment type="function">
    <text evidence="1">F(1)F(0) ATP synthase produces ATP from ADP in the presence of a proton or sodium gradient. F-type ATPases consist of two structural domains, F(1) containing the extramembraneous catalytic core and F(0) containing the membrane proton channel, linked together by a central stalk and a peripheral stalk. During catalysis, ATP synthesis in the catalytic domain of F(1) is coupled via a rotary mechanism of the central stalk subunits to proton translocation.</text>
</comment>
<comment type="function">
    <text evidence="1">This protein is part of the stalk that links CF(0) to CF(1). It either transmits conformational changes from CF(0) to CF(1) or is implicated in proton conduction.</text>
</comment>
<comment type="subunit">
    <text evidence="1">F-type ATPases have 2 components, F(1) - the catalytic core - and F(0) - the membrane proton channel. F(1) has five subunits: alpha(3), beta(3), gamma(1), delta(1), epsilon(1). F(0) has three main subunits: a(1), b(2) and c(10-14). The alpha and beta chains form an alternating ring which encloses part of the gamma chain. F(1) is attached to F(0) by a central stalk formed by the gamma and epsilon chains, while a peripheral stalk is formed by the delta and b chains.</text>
</comment>
<comment type="subcellular location">
    <subcellularLocation>
        <location evidence="1">Cell inner membrane</location>
        <topology evidence="1">Peripheral membrane protein</topology>
    </subcellularLocation>
</comment>
<comment type="similarity">
    <text evidence="1">Belongs to the ATPase delta chain family.</text>
</comment>
<dbReference type="EMBL" id="CP001089">
    <property type="protein sequence ID" value="ACD96879.1"/>
    <property type="molecule type" value="Genomic_DNA"/>
</dbReference>
<dbReference type="RefSeq" id="WP_012471203.1">
    <property type="nucleotide sequence ID" value="NC_010814.1"/>
</dbReference>
<dbReference type="SMR" id="B3EA04"/>
<dbReference type="STRING" id="398767.Glov_3173"/>
<dbReference type="KEGG" id="glo:Glov_3173"/>
<dbReference type="eggNOG" id="COG0712">
    <property type="taxonomic scope" value="Bacteria"/>
</dbReference>
<dbReference type="HOGENOM" id="CLU_085114_4_0_7"/>
<dbReference type="OrthoDB" id="9802471at2"/>
<dbReference type="Proteomes" id="UP000002420">
    <property type="component" value="Chromosome"/>
</dbReference>
<dbReference type="GO" id="GO:0005886">
    <property type="term" value="C:plasma membrane"/>
    <property type="evidence" value="ECO:0007669"/>
    <property type="project" value="UniProtKB-SubCell"/>
</dbReference>
<dbReference type="GO" id="GO:0045259">
    <property type="term" value="C:proton-transporting ATP synthase complex"/>
    <property type="evidence" value="ECO:0007669"/>
    <property type="project" value="UniProtKB-KW"/>
</dbReference>
<dbReference type="GO" id="GO:0046933">
    <property type="term" value="F:proton-transporting ATP synthase activity, rotational mechanism"/>
    <property type="evidence" value="ECO:0007669"/>
    <property type="project" value="UniProtKB-UniRule"/>
</dbReference>
<dbReference type="Gene3D" id="1.10.520.20">
    <property type="entry name" value="N-terminal domain of the delta subunit of the F1F0-ATP synthase"/>
    <property type="match status" value="1"/>
</dbReference>
<dbReference type="HAMAP" id="MF_01416">
    <property type="entry name" value="ATP_synth_delta_bact"/>
    <property type="match status" value="1"/>
</dbReference>
<dbReference type="InterPro" id="IPR026015">
    <property type="entry name" value="ATP_synth_OSCP/delta_N_sf"/>
</dbReference>
<dbReference type="InterPro" id="IPR000711">
    <property type="entry name" value="ATPase_OSCP/dsu"/>
</dbReference>
<dbReference type="NCBIfam" id="TIGR01145">
    <property type="entry name" value="ATP_synt_delta"/>
    <property type="match status" value="1"/>
</dbReference>
<dbReference type="NCBIfam" id="NF004402">
    <property type="entry name" value="PRK05758.2-2"/>
    <property type="match status" value="1"/>
</dbReference>
<dbReference type="NCBIfam" id="NF004403">
    <property type="entry name" value="PRK05758.2-4"/>
    <property type="match status" value="1"/>
</dbReference>
<dbReference type="PANTHER" id="PTHR11910">
    <property type="entry name" value="ATP SYNTHASE DELTA CHAIN"/>
    <property type="match status" value="1"/>
</dbReference>
<dbReference type="Pfam" id="PF00213">
    <property type="entry name" value="OSCP"/>
    <property type="match status" value="1"/>
</dbReference>
<dbReference type="PRINTS" id="PR00125">
    <property type="entry name" value="ATPASEDELTA"/>
</dbReference>
<dbReference type="SUPFAM" id="SSF47928">
    <property type="entry name" value="N-terminal domain of the delta subunit of the F1F0-ATP synthase"/>
    <property type="match status" value="1"/>
</dbReference>
<sequence length="180" mass="19730">MINNAIARRYAKALVQLGSEKDLIDRFSQELKVVSGVFAGNAELRAAFGNPAFTADQKKQIMRDLIARMQCSELVANFLLLLVDKNRVVCLPEIVETYEKLADEQSGVIRPMITTAFALDDSQVNAIKGALEQKTGKKVVPQVKVDQSLIGGVVTQIGDIAYDSSVKTQLARIHDILQKG</sequence>
<name>ATPD_TRIL1</name>